<sequence length="270" mass="29078">MLTVENIEVTLGATPVLHGIDMVAQPGQVTAIVGHNGSGKTTLLRAMTQETPYTGTIRLDGADLASFKPWELATRRAVLPQASRIAFPFTVLEVVRLGLLAGRDGARKALPQEALARVGLSGFEGRYYQELSGGEQQRVQLARVLAQVWEPVQDGQPRWLFLDEPVSSLDIGHQLEVMEIAREYARGGGGVIAVMHDLNLTAMFADHVVLLADGRCLSAGRPAQVMTDVTLSQAYGCTLQVNTSPPGDATYLLPHLARRTGGAHHARRTG</sequence>
<proteinExistence type="inferred from homology"/>
<gene>
    <name evidence="1" type="primary">hmuV</name>
    <name type="ordered locus">Jann_2136</name>
</gene>
<protein>
    <recommendedName>
        <fullName evidence="1">Hemin import ATP-binding protein HmuV</fullName>
        <ecNumber evidence="1">7.6.2.-</ecNumber>
    </recommendedName>
</protein>
<accession>Q28QF9</accession>
<reference key="1">
    <citation type="submission" date="2006-02" db="EMBL/GenBank/DDBJ databases">
        <title>Complete sequence of chromosome of Jannaschia sp. CCS1.</title>
        <authorList>
            <consortium name="US DOE Joint Genome Institute"/>
            <person name="Copeland A."/>
            <person name="Lucas S."/>
            <person name="Lapidus A."/>
            <person name="Barry K."/>
            <person name="Detter J.C."/>
            <person name="Glavina del Rio T."/>
            <person name="Hammon N."/>
            <person name="Israni S."/>
            <person name="Pitluck S."/>
            <person name="Brettin T."/>
            <person name="Bruce D."/>
            <person name="Han C."/>
            <person name="Tapia R."/>
            <person name="Gilna P."/>
            <person name="Chertkov O."/>
            <person name="Saunders E."/>
            <person name="Schmutz J."/>
            <person name="Larimer F."/>
            <person name="Land M."/>
            <person name="Kyrpides N."/>
            <person name="Lykidis A."/>
            <person name="Moran M.A."/>
            <person name="Belas R."/>
            <person name="Ye W."/>
            <person name="Buchan A."/>
            <person name="Gonzalez J.M."/>
            <person name="Schell M.A."/>
            <person name="Richardson P."/>
        </authorList>
    </citation>
    <scope>NUCLEOTIDE SEQUENCE [LARGE SCALE GENOMIC DNA]</scope>
    <source>
        <strain>CCS1</strain>
    </source>
</reference>
<keyword id="KW-0067">ATP-binding</keyword>
<keyword id="KW-0997">Cell inner membrane</keyword>
<keyword id="KW-1003">Cell membrane</keyword>
<keyword id="KW-0472">Membrane</keyword>
<keyword id="KW-0547">Nucleotide-binding</keyword>
<keyword id="KW-1185">Reference proteome</keyword>
<keyword id="KW-1278">Translocase</keyword>
<keyword id="KW-0813">Transport</keyword>
<dbReference type="EC" id="7.6.2.-" evidence="1"/>
<dbReference type="EMBL" id="CP000264">
    <property type="protein sequence ID" value="ABD55053.1"/>
    <property type="molecule type" value="Genomic_DNA"/>
</dbReference>
<dbReference type="RefSeq" id="WP_011455257.1">
    <property type="nucleotide sequence ID" value="NC_007802.1"/>
</dbReference>
<dbReference type="SMR" id="Q28QF9"/>
<dbReference type="STRING" id="290400.Jann_2136"/>
<dbReference type="KEGG" id="jan:Jann_2136"/>
<dbReference type="eggNOG" id="COG4559">
    <property type="taxonomic scope" value="Bacteria"/>
</dbReference>
<dbReference type="HOGENOM" id="CLU_000604_1_11_5"/>
<dbReference type="OrthoDB" id="9805601at2"/>
<dbReference type="Proteomes" id="UP000008326">
    <property type="component" value="Chromosome"/>
</dbReference>
<dbReference type="GO" id="GO:0005886">
    <property type="term" value="C:plasma membrane"/>
    <property type="evidence" value="ECO:0007669"/>
    <property type="project" value="UniProtKB-SubCell"/>
</dbReference>
<dbReference type="GO" id="GO:0005524">
    <property type="term" value="F:ATP binding"/>
    <property type="evidence" value="ECO:0007669"/>
    <property type="project" value="UniProtKB-KW"/>
</dbReference>
<dbReference type="GO" id="GO:0016887">
    <property type="term" value="F:ATP hydrolysis activity"/>
    <property type="evidence" value="ECO:0007669"/>
    <property type="project" value="InterPro"/>
</dbReference>
<dbReference type="CDD" id="cd03214">
    <property type="entry name" value="ABC_Iron-Siderophores_B12_Hemin"/>
    <property type="match status" value="1"/>
</dbReference>
<dbReference type="Gene3D" id="3.40.50.300">
    <property type="entry name" value="P-loop containing nucleotide triphosphate hydrolases"/>
    <property type="match status" value="1"/>
</dbReference>
<dbReference type="InterPro" id="IPR003593">
    <property type="entry name" value="AAA+_ATPase"/>
</dbReference>
<dbReference type="InterPro" id="IPR003439">
    <property type="entry name" value="ABC_transporter-like_ATP-bd"/>
</dbReference>
<dbReference type="InterPro" id="IPR017871">
    <property type="entry name" value="ABC_transporter-like_CS"/>
</dbReference>
<dbReference type="InterPro" id="IPR027417">
    <property type="entry name" value="P-loop_NTPase"/>
</dbReference>
<dbReference type="NCBIfam" id="NF010068">
    <property type="entry name" value="PRK13548.1"/>
    <property type="match status" value="1"/>
</dbReference>
<dbReference type="PANTHER" id="PTHR42794">
    <property type="entry name" value="HEMIN IMPORT ATP-BINDING PROTEIN HMUV"/>
    <property type="match status" value="1"/>
</dbReference>
<dbReference type="PANTHER" id="PTHR42794:SF1">
    <property type="entry name" value="HEMIN IMPORT ATP-BINDING PROTEIN HMUV"/>
    <property type="match status" value="1"/>
</dbReference>
<dbReference type="Pfam" id="PF00005">
    <property type="entry name" value="ABC_tran"/>
    <property type="match status" value="1"/>
</dbReference>
<dbReference type="SMART" id="SM00382">
    <property type="entry name" value="AAA"/>
    <property type="match status" value="1"/>
</dbReference>
<dbReference type="SUPFAM" id="SSF52540">
    <property type="entry name" value="P-loop containing nucleoside triphosphate hydrolases"/>
    <property type="match status" value="1"/>
</dbReference>
<dbReference type="PROSITE" id="PS00211">
    <property type="entry name" value="ABC_TRANSPORTER_1"/>
    <property type="match status" value="1"/>
</dbReference>
<dbReference type="PROSITE" id="PS50893">
    <property type="entry name" value="ABC_TRANSPORTER_2"/>
    <property type="match status" value="1"/>
</dbReference>
<dbReference type="PROSITE" id="PS51261">
    <property type="entry name" value="HMUV"/>
    <property type="match status" value="1"/>
</dbReference>
<feature type="chain" id="PRO_0000269598" description="Hemin import ATP-binding protein HmuV">
    <location>
        <begin position="1"/>
        <end position="270"/>
    </location>
</feature>
<feature type="domain" description="ABC transporter" evidence="1">
    <location>
        <begin position="2"/>
        <end position="238"/>
    </location>
</feature>
<feature type="binding site" evidence="1">
    <location>
        <begin position="34"/>
        <end position="41"/>
    </location>
    <ligand>
        <name>ATP</name>
        <dbReference type="ChEBI" id="CHEBI:30616"/>
    </ligand>
</feature>
<comment type="function">
    <text evidence="1">Part of the ABC transporter complex HmuTUV involved in hemin import. Responsible for energy coupling to the transport system.</text>
</comment>
<comment type="subunit">
    <text evidence="1">The complex is composed of two ATP-binding proteins (HmuV), two transmembrane proteins (HmuU) and a solute-binding protein (HmuT).</text>
</comment>
<comment type="subcellular location">
    <subcellularLocation>
        <location evidence="1">Cell inner membrane</location>
        <topology evidence="1">Peripheral membrane protein</topology>
    </subcellularLocation>
</comment>
<comment type="similarity">
    <text evidence="1">Belongs to the ABC transporter superfamily. Heme (hemin) importer (TC 3.A.1.14.5) family.</text>
</comment>
<organism>
    <name type="scientific">Jannaschia sp. (strain CCS1)</name>
    <dbReference type="NCBI Taxonomy" id="290400"/>
    <lineage>
        <taxon>Bacteria</taxon>
        <taxon>Pseudomonadati</taxon>
        <taxon>Pseudomonadota</taxon>
        <taxon>Alphaproteobacteria</taxon>
        <taxon>Rhodobacterales</taxon>
        <taxon>Roseobacteraceae</taxon>
        <taxon>Jannaschia</taxon>
    </lineage>
</organism>
<name>HMUV_JANSC</name>
<evidence type="ECO:0000255" key="1">
    <source>
        <dbReference type="HAMAP-Rule" id="MF_01718"/>
    </source>
</evidence>